<feature type="chain" id="PRO_0000299283" description="Auxin response factor 23">
    <location>
        <begin position="1"/>
        <end position="853"/>
    </location>
</feature>
<feature type="domain" description="PB1" evidence="3">
    <location>
        <begin position="725"/>
        <end position="809"/>
    </location>
</feature>
<feature type="DNA-binding region" description="TF-B3" evidence="2">
    <location>
        <begin position="149"/>
        <end position="251"/>
    </location>
</feature>
<feature type="region of interest" description="Disordered" evidence="4">
    <location>
        <begin position="118"/>
        <end position="141"/>
    </location>
</feature>
<feature type="region of interest" description="Disordered" evidence="4">
    <location>
        <begin position="422"/>
        <end position="484"/>
    </location>
</feature>
<feature type="region of interest" description="Disordered" evidence="4">
    <location>
        <begin position="647"/>
        <end position="723"/>
    </location>
</feature>
<feature type="region of interest" description="Disordered" evidence="4">
    <location>
        <begin position="815"/>
        <end position="853"/>
    </location>
</feature>
<feature type="compositionally biased region" description="Polar residues" evidence="4">
    <location>
        <begin position="425"/>
        <end position="455"/>
    </location>
</feature>
<feature type="compositionally biased region" description="Basic and acidic residues" evidence="4">
    <location>
        <begin position="672"/>
        <end position="686"/>
    </location>
</feature>
<feature type="compositionally biased region" description="Polar residues" evidence="4">
    <location>
        <begin position="706"/>
        <end position="723"/>
    </location>
</feature>
<feature type="compositionally biased region" description="Polar residues" evidence="4">
    <location>
        <begin position="843"/>
        <end position="853"/>
    </location>
</feature>
<feature type="splice variant" id="VSP_027594" description="In isoform 3." evidence="8">
    <location>
        <begin position="10"/>
        <end position="26"/>
    </location>
</feature>
<feature type="splice variant" id="VSP_027595" description="In isoform 2." evidence="9">
    <location>
        <position position="23"/>
    </location>
</feature>
<feature type="sequence conflict" description="In Ref. 1; CAC83756." evidence="9" ref="1">
    <original>C</original>
    <variation>W</variation>
    <location>
        <position position="510"/>
    </location>
</feature>
<reference key="1">
    <citation type="journal article" date="2002" name="Plant Mol. Biol.">
        <title>OsARF1, an auxin response factor from rice, is auxin-regulated and classifies as a primary auxin responsive gene.</title>
        <authorList>
            <person name="Waller F."/>
            <person name="Furuya M."/>
            <person name="Nick P."/>
        </authorList>
    </citation>
    <scope>NUCLEOTIDE SEQUENCE [MRNA] (ISOFORM 3)</scope>
    <scope>SUBCELLULAR LOCATION</scope>
    <scope>INDUCTION</scope>
</reference>
<reference key="2">
    <citation type="journal article" date="2005" name="BMC Biol.">
        <title>The sequence of rice chromosomes 11 and 12, rich in disease resistance genes and recent gene duplications.</title>
        <authorList>
            <consortium name="The rice chromosomes 11 and 12 sequencing consortia"/>
        </authorList>
    </citation>
    <scope>NUCLEOTIDE SEQUENCE [LARGE SCALE GENOMIC DNA]</scope>
    <source>
        <strain>cv. Nipponbare</strain>
    </source>
</reference>
<reference key="3">
    <citation type="journal article" date="2005" name="Nature">
        <title>The map-based sequence of the rice genome.</title>
        <authorList>
            <consortium name="International rice genome sequencing project (IRGSP)"/>
        </authorList>
    </citation>
    <scope>NUCLEOTIDE SEQUENCE [LARGE SCALE GENOMIC DNA]</scope>
    <source>
        <strain>cv. Nipponbare</strain>
    </source>
</reference>
<reference key="4">
    <citation type="journal article" date="2008" name="Nucleic Acids Res.">
        <title>The rice annotation project database (RAP-DB): 2008 update.</title>
        <authorList>
            <consortium name="The rice annotation project (RAP)"/>
        </authorList>
    </citation>
    <scope>GENOME REANNOTATION</scope>
    <source>
        <strain>cv. Nipponbare</strain>
    </source>
</reference>
<reference key="5">
    <citation type="journal article" date="2013" name="Rice">
        <title>Improvement of the Oryza sativa Nipponbare reference genome using next generation sequence and optical map data.</title>
        <authorList>
            <person name="Kawahara Y."/>
            <person name="de la Bastide M."/>
            <person name="Hamilton J.P."/>
            <person name="Kanamori H."/>
            <person name="McCombie W.R."/>
            <person name="Ouyang S."/>
            <person name="Schwartz D.C."/>
            <person name="Tanaka T."/>
            <person name="Wu J."/>
            <person name="Zhou S."/>
            <person name="Childs K.L."/>
            <person name="Davidson R.M."/>
            <person name="Lin H."/>
            <person name="Quesada-Ocampo L."/>
            <person name="Vaillancourt B."/>
            <person name="Sakai H."/>
            <person name="Lee S.S."/>
            <person name="Kim J."/>
            <person name="Numa H."/>
            <person name="Itoh T."/>
            <person name="Buell C.R."/>
            <person name="Matsumoto T."/>
        </authorList>
    </citation>
    <scope>GENOME REANNOTATION</scope>
    <source>
        <strain>cv. Nipponbare</strain>
    </source>
</reference>
<reference key="6">
    <citation type="journal article" date="2005" name="Plant Cell">
        <title>Crown rootless1, which is essential for crown root formation in rice, is a target of an AUXIN RESPONSE FACTOR in auxin signaling.</title>
        <authorList>
            <person name="Inukai Y."/>
            <person name="Sakamoto T."/>
            <person name="Ueguchi-Tanaka M."/>
            <person name="Shibata Y."/>
            <person name="Gomi K."/>
            <person name="Umemura I."/>
            <person name="Hasegawa Y."/>
            <person name="Ashikari M."/>
            <person name="Kitano H."/>
            <person name="Matsuoka M."/>
        </authorList>
    </citation>
    <scope>INTERACTION WITH CRL1</scope>
</reference>
<reference key="7">
    <citation type="journal article" date="2007" name="Gene">
        <title>Genome-wide analysis of the auxin response factors (ARF) gene family in rice (Oryza sativa).</title>
        <authorList>
            <person name="Wang D."/>
            <person name="Pei K."/>
            <person name="Fu Y."/>
            <person name="Sun Z."/>
            <person name="Li S."/>
            <person name="Liu H."/>
            <person name="Tang K."/>
            <person name="Han B."/>
            <person name="Tao Y."/>
        </authorList>
    </citation>
    <scope>GENE FAMILY</scope>
    <scope>TISSUE SPECIFICITY</scope>
    <scope>INDUCTION</scope>
    <scope>NOMENCLATURE</scope>
</reference>
<evidence type="ECO:0000250" key="1"/>
<evidence type="ECO:0000255" key="2">
    <source>
        <dbReference type="PROSITE-ProRule" id="PRU00326"/>
    </source>
</evidence>
<evidence type="ECO:0000255" key="3">
    <source>
        <dbReference type="PROSITE-ProRule" id="PRU01081"/>
    </source>
</evidence>
<evidence type="ECO:0000256" key="4">
    <source>
        <dbReference type="SAM" id="MobiDB-lite"/>
    </source>
</evidence>
<evidence type="ECO:0000269" key="5">
    <source>
    </source>
</evidence>
<evidence type="ECO:0000269" key="6">
    <source>
    </source>
</evidence>
<evidence type="ECO:0000269" key="7">
    <source>
    </source>
</evidence>
<evidence type="ECO:0000303" key="8">
    <source>
    </source>
</evidence>
<evidence type="ECO:0000305" key="9"/>
<comment type="function">
    <text>Auxin response factors (ARFs) are transcriptional factors that bind specifically to the DNA sequence 5'-TGTCTC-3' found in the auxin-responsive promoter elements (AuxREs).</text>
</comment>
<comment type="subunit">
    <text evidence="1 6">Homodimers and heterodimers (By similarity). Interacts with CRL1.</text>
</comment>
<comment type="subcellular location">
    <subcellularLocation>
        <location evidence="2 5">Nucleus</location>
    </subcellularLocation>
</comment>
<comment type="alternative products">
    <event type="alternative splicing"/>
    <isoform>
        <id>Q2R3F5-1</id>
        <name>1</name>
        <sequence type="displayed"/>
    </isoform>
    <isoform>
        <id>Q2R3F5-2</id>
        <name>2</name>
        <sequence type="described" ref="VSP_027595"/>
    </isoform>
    <isoform>
        <id>Q2R3F5-3</id>
        <name>3</name>
        <sequence type="described" ref="VSP_027594"/>
    </isoform>
</comment>
<comment type="tissue specificity">
    <text evidence="7">Expressed in roots, culms, leaves and young panicles.</text>
</comment>
<comment type="induction">
    <text evidence="5 7">By auxin under light or dark conditions and gravitropic stimulation of coleptile.</text>
</comment>
<comment type="domain">
    <text>Interactions between auxin response factors (ARFs) and Aux/IAA proteins occur through their C-terminal dimerization domains III and IV.</text>
</comment>
<comment type="miscellaneous">
    <molecule>Isoform 2</molecule>
    <text evidence="9">May be due to competing acceptor splice site.</text>
</comment>
<comment type="similarity">
    <text evidence="9">Belongs to the ARF family.</text>
</comment>
<accession>Q2R3F5</accession>
<accession>Q0ISG4</accession>
<accession>Q8GST0</accession>
<proteinExistence type="evidence at protein level"/>
<dbReference type="EMBL" id="AJ306306">
    <property type="protein sequence ID" value="CAC83756.1"/>
    <property type="molecule type" value="mRNA"/>
</dbReference>
<dbReference type="EMBL" id="DP000010">
    <property type="protein sequence ID" value="ABA93992.2"/>
    <property type="molecule type" value="Genomic_DNA"/>
</dbReference>
<dbReference type="EMBL" id="AP008217">
    <property type="protein sequence ID" value="BAF28351.1"/>
    <property type="molecule type" value="Genomic_DNA"/>
</dbReference>
<dbReference type="EMBL" id="AP014967">
    <property type="status" value="NOT_ANNOTATED_CDS"/>
    <property type="molecule type" value="Genomic_DNA"/>
</dbReference>
<dbReference type="RefSeq" id="XP_015617186.1">
    <property type="nucleotide sequence ID" value="XM_015761700.1"/>
</dbReference>
<dbReference type="RefSeq" id="XP_015617187.1">
    <property type="nucleotide sequence ID" value="XM_015761701.1"/>
</dbReference>
<dbReference type="RefSeq" id="XP_015617188.1">
    <property type="nucleotide sequence ID" value="XM_015761702.1"/>
</dbReference>
<dbReference type="SMR" id="Q2R3F5"/>
<dbReference type="FunCoup" id="Q2R3F5">
    <property type="interactions" value="1727"/>
</dbReference>
<dbReference type="PaxDb" id="39947-Q2R3F5"/>
<dbReference type="KEGG" id="dosa:Os11g0523800"/>
<dbReference type="eggNOG" id="ENOG502QRXI">
    <property type="taxonomic scope" value="Eukaryota"/>
</dbReference>
<dbReference type="InParanoid" id="Q2R3F5"/>
<dbReference type="OrthoDB" id="1912783at2759"/>
<dbReference type="PlantReactome" id="R-OSA-5608118">
    <property type="pathway name" value="Auxin signalling"/>
</dbReference>
<dbReference type="Proteomes" id="UP000000763">
    <property type="component" value="Chromosome 11"/>
</dbReference>
<dbReference type="Proteomes" id="UP000059680">
    <property type="component" value="Chromosome 11"/>
</dbReference>
<dbReference type="GO" id="GO:0005634">
    <property type="term" value="C:nucleus"/>
    <property type="evidence" value="ECO:0007669"/>
    <property type="project" value="UniProtKB-SubCell"/>
</dbReference>
<dbReference type="GO" id="GO:0003677">
    <property type="term" value="F:DNA binding"/>
    <property type="evidence" value="ECO:0007669"/>
    <property type="project" value="UniProtKB-KW"/>
</dbReference>
<dbReference type="GO" id="GO:0009734">
    <property type="term" value="P:auxin-activated signaling pathway"/>
    <property type="evidence" value="ECO:0007669"/>
    <property type="project" value="UniProtKB-KW"/>
</dbReference>
<dbReference type="GO" id="GO:0006355">
    <property type="term" value="P:regulation of DNA-templated transcription"/>
    <property type="evidence" value="ECO:0007669"/>
    <property type="project" value="InterPro"/>
</dbReference>
<dbReference type="CDD" id="cd10017">
    <property type="entry name" value="B3_DNA"/>
    <property type="match status" value="1"/>
</dbReference>
<dbReference type="FunFam" id="2.30.30.1040:FF:000001">
    <property type="entry name" value="Auxin response factor"/>
    <property type="match status" value="1"/>
</dbReference>
<dbReference type="FunFam" id="2.40.330.10:FF:000001">
    <property type="entry name" value="Auxin response factor"/>
    <property type="match status" value="1"/>
</dbReference>
<dbReference type="FunFam" id="3.10.20.90:FF:000047">
    <property type="entry name" value="Auxin response factor"/>
    <property type="match status" value="1"/>
</dbReference>
<dbReference type="Gene3D" id="2.30.30.1040">
    <property type="match status" value="1"/>
</dbReference>
<dbReference type="Gene3D" id="2.40.330.10">
    <property type="entry name" value="DNA-binding pseudobarrel domain"/>
    <property type="match status" value="1"/>
</dbReference>
<dbReference type="Gene3D" id="3.10.20.90">
    <property type="entry name" value="Phosphatidylinositol 3-kinase Catalytic Subunit, Chain A, domain 1"/>
    <property type="match status" value="1"/>
</dbReference>
<dbReference type="InterPro" id="IPR010525">
    <property type="entry name" value="ARF_dom"/>
</dbReference>
<dbReference type="InterPro" id="IPR044835">
    <property type="entry name" value="ARF_plant"/>
</dbReference>
<dbReference type="InterPro" id="IPR033389">
    <property type="entry name" value="AUX/IAA_dom"/>
</dbReference>
<dbReference type="InterPro" id="IPR003340">
    <property type="entry name" value="B3_DNA-bd"/>
</dbReference>
<dbReference type="InterPro" id="IPR015300">
    <property type="entry name" value="DNA-bd_pseudobarrel_sf"/>
</dbReference>
<dbReference type="InterPro" id="IPR053793">
    <property type="entry name" value="PB1-like"/>
</dbReference>
<dbReference type="PANTHER" id="PTHR31384:SF79">
    <property type="entry name" value="AUXIN RESPONSE FACTOR 2"/>
    <property type="match status" value="1"/>
</dbReference>
<dbReference type="PANTHER" id="PTHR31384">
    <property type="entry name" value="AUXIN RESPONSE FACTOR 4-RELATED"/>
    <property type="match status" value="1"/>
</dbReference>
<dbReference type="Pfam" id="PF06507">
    <property type="entry name" value="ARF_AD"/>
    <property type="match status" value="1"/>
</dbReference>
<dbReference type="Pfam" id="PF02309">
    <property type="entry name" value="AUX_IAA"/>
    <property type="match status" value="1"/>
</dbReference>
<dbReference type="Pfam" id="PF02362">
    <property type="entry name" value="B3"/>
    <property type="match status" value="1"/>
</dbReference>
<dbReference type="SMART" id="SM01019">
    <property type="entry name" value="B3"/>
    <property type="match status" value="1"/>
</dbReference>
<dbReference type="SUPFAM" id="SSF54277">
    <property type="entry name" value="CAD &amp; PB1 domains"/>
    <property type="match status" value="1"/>
</dbReference>
<dbReference type="SUPFAM" id="SSF101936">
    <property type="entry name" value="DNA-binding pseudobarrel domain"/>
    <property type="match status" value="1"/>
</dbReference>
<dbReference type="PROSITE" id="PS50863">
    <property type="entry name" value="B3"/>
    <property type="match status" value="1"/>
</dbReference>
<dbReference type="PROSITE" id="PS51745">
    <property type="entry name" value="PB1"/>
    <property type="match status" value="1"/>
</dbReference>
<sequence>MATAEVGGGGGEGDAAAAAVARAGGGGGGGGGGGEDALFTELWSACAGPLVTVPRVGEKVFYFPQGHIEQVEASTNQVGEQRMQLYNLPWKILCEVMNVELKAEPDTDEVYAQLTLLPESKQQEDNGSTEEEVPSAPAAGHVRPRVHSFCKTLTASDTSTHGGFSVLRRHADECLPPLDMSRQPPTQELVAKDLHGVEWRFRHIFRGQPRRHLLQSGWSVFVSAKRLVAGDAFIFLRGENGELRVGVRRAMRQQTNVPSSVISSHSMHLGVLATAWHAVNTGTMFTVYYKPRTSPAEFVVPYDRYMESLKQNYSIGMRFKMRFEGEEAPEQRFTGTIVGMGDSDPAGWPESKWRSLKVRWDEASSIPRPERVSPWQIEPAVSPPPVNPLPVPRTKRLRPNATALPADSSAIAKEAATKVVVESEPNGTQRTFQTQENATPKSGFGNSSELESAQKSIMRPSGFDREKNNTPIQWKLGSDGRMQMSKPESYSEMLSGFQPPKDVQIPQGFCSLPEQITAGHSNFWHTVNAQYQDQQSNHNMFPSSWSFMPPNTRLGLNKQNYSMIQEAGVLSQRPGNTKFGNGVYAALPGRGTEQYSGGWFGHMMPNSHMDDTQPRLIKPKPLVVAHGDVQKAKGASCKLFGIHLDSPAKSEPLKSPSSVVYDGTPQTPGATEWRRPDVTEVEKCSDPSKAMKPLDTPQPDSVPEKPSSQQASRNMSCKSQGVSTRSCKKVHKQGIALGRSVDLTKFNGYEELIAELDDMFDFNGELKGPKKEWMVVYTDNEGDMMLVGDDPWIEFCDMVHKIFIYTREEVQRMNPGTLNSRSEDSHANSMERGSVGREMRGCLSTSSLNSENC</sequence>
<organism>
    <name type="scientific">Oryza sativa subsp. japonica</name>
    <name type="common">Rice</name>
    <dbReference type="NCBI Taxonomy" id="39947"/>
    <lineage>
        <taxon>Eukaryota</taxon>
        <taxon>Viridiplantae</taxon>
        <taxon>Streptophyta</taxon>
        <taxon>Embryophyta</taxon>
        <taxon>Tracheophyta</taxon>
        <taxon>Spermatophyta</taxon>
        <taxon>Magnoliopsida</taxon>
        <taxon>Liliopsida</taxon>
        <taxon>Poales</taxon>
        <taxon>Poaceae</taxon>
        <taxon>BOP clade</taxon>
        <taxon>Oryzoideae</taxon>
        <taxon>Oryzeae</taxon>
        <taxon>Oryzinae</taxon>
        <taxon>Oryza</taxon>
        <taxon>Oryza sativa</taxon>
    </lineage>
</organism>
<name>ARFW_ORYSJ</name>
<gene>
    <name type="primary">ARF23</name>
    <name type="synonym">ARF1</name>
    <name type="ordered locus">Os11g0523800</name>
    <name type="ordered locus">LOC_Os11g32110</name>
</gene>
<keyword id="KW-0025">Alternative splicing</keyword>
<keyword id="KW-0927">Auxin signaling pathway</keyword>
<keyword id="KW-0238">DNA-binding</keyword>
<keyword id="KW-0539">Nucleus</keyword>
<keyword id="KW-1185">Reference proteome</keyword>
<keyword id="KW-0804">Transcription</keyword>
<keyword id="KW-0805">Transcription regulation</keyword>
<protein>
    <recommendedName>
        <fullName>Auxin response factor 23</fullName>
    </recommendedName>
    <alternativeName>
        <fullName>OsARF1</fullName>
    </alternativeName>
</protein>